<evidence type="ECO:0000250" key="1"/>
<evidence type="ECO:0000250" key="2">
    <source>
        <dbReference type="UniProtKB" id="P00157"/>
    </source>
</evidence>
<evidence type="ECO:0000250" key="3">
    <source>
        <dbReference type="UniProtKB" id="P00163"/>
    </source>
</evidence>
<evidence type="ECO:0000255" key="4"/>
<evidence type="ECO:0000255" key="5">
    <source>
        <dbReference type="PROSITE-ProRule" id="PRU00967"/>
    </source>
</evidence>
<evidence type="ECO:0000255" key="6">
    <source>
        <dbReference type="PROSITE-ProRule" id="PRU00968"/>
    </source>
</evidence>
<geneLocation type="mitochondrion"/>
<reference key="1">
    <citation type="journal article" date="2005" name="Science">
        <title>Genome of the host-cell transforming parasite Theileria annulata compared with T. parva.</title>
        <authorList>
            <person name="Pain A."/>
            <person name="Renauld H."/>
            <person name="Berriman M."/>
            <person name="Murphy L."/>
            <person name="Yeats C.A."/>
            <person name="Weir W."/>
            <person name="Kerhornou A."/>
            <person name="Aslett M."/>
            <person name="Bishop R."/>
            <person name="Bouchier C."/>
            <person name="Cochet M."/>
            <person name="Coulson R.M.R."/>
            <person name="Cronin A."/>
            <person name="de Villiers E.P."/>
            <person name="Fraser A."/>
            <person name="Fosker N."/>
            <person name="Gardner M."/>
            <person name="Goble A."/>
            <person name="Griffiths-Jones S."/>
            <person name="Harris D.E."/>
            <person name="Katzer F."/>
            <person name="Larke N."/>
            <person name="Lord A."/>
            <person name="Maser P."/>
            <person name="McKellar S."/>
            <person name="Mooney P."/>
            <person name="Morton F."/>
            <person name="Nene V."/>
            <person name="O'Neil S."/>
            <person name="Price C."/>
            <person name="Quail M.A."/>
            <person name="Rabbinowitsch E."/>
            <person name="Rawlings N.D."/>
            <person name="Rutter S."/>
            <person name="Saunders D."/>
            <person name="Seeger K."/>
            <person name="Shah T."/>
            <person name="Squares R."/>
            <person name="Squares S."/>
            <person name="Tivey A."/>
            <person name="Walker A.R."/>
            <person name="Woodward J."/>
            <person name="Dobbelaere D.A.E."/>
            <person name="Langsley G."/>
            <person name="Rajandream M.A."/>
            <person name="McKeever D."/>
            <person name="Shiels B."/>
            <person name="Tait A."/>
            <person name="Barrell B.G."/>
            <person name="Hall N."/>
        </authorList>
    </citation>
    <scope>NUCLEOTIDE SEQUENCE [LARGE SCALE GENOMIC DNA]</scope>
    <source>
        <strain>Ankara</strain>
    </source>
</reference>
<protein>
    <recommendedName>
        <fullName>Cytochrome b</fullName>
    </recommendedName>
    <alternativeName>
        <fullName>Complex III subunit 3</fullName>
    </alternativeName>
    <alternativeName>
        <fullName>Complex III subunit III</fullName>
    </alternativeName>
    <alternativeName>
        <fullName>Cytochrome b-c1 complex subunit 3</fullName>
    </alternativeName>
    <alternativeName>
        <fullName>Ubiquinol-cytochrome-c reductase complex cytochrome b subunit</fullName>
    </alternativeName>
</protein>
<dbReference type="EMBL" id="CR940346">
    <property type="protein sequence ID" value="CAI72676.1"/>
    <property type="molecule type" value="Genomic_DNA"/>
</dbReference>
<dbReference type="SMR" id="Q4UJ67"/>
<dbReference type="FunCoup" id="Q4UJ67">
    <property type="interactions" value="33"/>
</dbReference>
<dbReference type="STRING" id="5874.Q4UJ67"/>
<dbReference type="VEuPathDB" id="PiroplasmaDB:Tap370b08.q2ca38.03c"/>
<dbReference type="eggNOG" id="KOG4663">
    <property type="taxonomic scope" value="Eukaryota"/>
</dbReference>
<dbReference type="InParanoid" id="Q4UJ67"/>
<dbReference type="OMA" id="NISAWWN"/>
<dbReference type="OrthoDB" id="361890at2759"/>
<dbReference type="Proteomes" id="UP000001950">
    <property type="component" value="Mitochondrion"/>
</dbReference>
<dbReference type="GO" id="GO:0005743">
    <property type="term" value="C:mitochondrial inner membrane"/>
    <property type="evidence" value="ECO:0007669"/>
    <property type="project" value="UniProtKB-SubCell"/>
</dbReference>
<dbReference type="GO" id="GO:0046872">
    <property type="term" value="F:metal ion binding"/>
    <property type="evidence" value="ECO:0007669"/>
    <property type="project" value="UniProtKB-KW"/>
</dbReference>
<dbReference type="GO" id="GO:0008121">
    <property type="term" value="F:ubiquinol-cytochrome-c reductase activity"/>
    <property type="evidence" value="ECO:0007669"/>
    <property type="project" value="TreeGrafter"/>
</dbReference>
<dbReference type="GO" id="GO:0006122">
    <property type="term" value="P:mitochondrial electron transport, ubiquinol to cytochrome c"/>
    <property type="evidence" value="ECO:0007669"/>
    <property type="project" value="TreeGrafter"/>
</dbReference>
<dbReference type="Gene3D" id="1.20.810.10">
    <property type="entry name" value="Cytochrome Bc1 Complex, Chain C"/>
    <property type="match status" value="1"/>
</dbReference>
<dbReference type="InterPro" id="IPR005798">
    <property type="entry name" value="Cyt_b/b6_C"/>
</dbReference>
<dbReference type="InterPro" id="IPR036150">
    <property type="entry name" value="Cyt_b/b6_C_sf"/>
</dbReference>
<dbReference type="InterPro" id="IPR005797">
    <property type="entry name" value="Cyt_b/b6_N"/>
</dbReference>
<dbReference type="InterPro" id="IPR027387">
    <property type="entry name" value="Cytb/b6-like_sf"/>
</dbReference>
<dbReference type="InterPro" id="IPR016174">
    <property type="entry name" value="Di-haem_cyt_TM"/>
</dbReference>
<dbReference type="PANTHER" id="PTHR19271">
    <property type="entry name" value="CYTOCHROME B"/>
    <property type="match status" value="1"/>
</dbReference>
<dbReference type="PANTHER" id="PTHR19271:SF16">
    <property type="entry name" value="CYTOCHROME B"/>
    <property type="match status" value="1"/>
</dbReference>
<dbReference type="Pfam" id="PF00032">
    <property type="entry name" value="Cytochrom_B_C"/>
    <property type="match status" value="1"/>
</dbReference>
<dbReference type="Pfam" id="PF00033">
    <property type="entry name" value="Cytochrome_B"/>
    <property type="match status" value="1"/>
</dbReference>
<dbReference type="SUPFAM" id="SSF81648">
    <property type="entry name" value="a domain/subunit of cytochrome bc1 complex (Ubiquinol-cytochrome c reductase)"/>
    <property type="match status" value="1"/>
</dbReference>
<dbReference type="SUPFAM" id="SSF81342">
    <property type="entry name" value="Transmembrane di-heme cytochromes"/>
    <property type="match status" value="1"/>
</dbReference>
<dbReference type="PROSITE" id="PS51003">
    <property type="entry name" value="CYTB_CTER"/>
    <property type="match status" value="1"/>
</dbReference>
<dbReference type="PROSITE" id="PS51002">
    <property type="entry name" value="CYTB_NTER"/>
    <property type="match status" value="1"/>
</dbReference>
<proteinExistence type="inferred from homology"/>
<organism>
    <name type="scientific">Theileria annulata</name>
    <dbReference type="NCBI Taxonomy" id="5874"/>
    <lineage>
        <taxon>Eukaryota</taxon>
        <taxon>Sar</taxon>
        <taxon>Alveolata</taxon>
        <taxon>Apicomplexa</taxon>
        <taxon>Aconoidasida</taxon>
        <taxon>Piroplasmida</taxon>
        <taxon>Theileriidae</taxon>
        <taxon>Theileria</taxon>
    </lineage>
</organism>
<keyword id="KW-0249">Electron transport</keyword>
<keyword id="KW-0349">Heme</keyword>
<keyword id="KW-0408">Iron</keyword>
<keyword id="KW-0472">Membrane</keyword>
<keyword id="KW-0479">Metal-binding</keyword>
<keyword id="KW-0496">Mitochondrion</keyword>
<keyword id="KW-0999">Mitochondrion inner membrane</keyword>
<keyword id="KW-1185">Reference proteome</keyword>
<keyword id="KW-0679">Respiratory chain</keyword>
<keyword id="KW-0812">Transmembrane</keyword>
<keyword id="KW-1133">Transmembrane helix</keyword>
<keyword id="KW-0813">Transport</keyword>
<keyword id="KW-0830">Ubiquinone</keyword>
<sequence>MNLFNSHLLSYMVPKNLNLNWNFGFILGILLVLQIISGLMLSFFYVPAKGMAFESTLAVMLNICFGWFVRLYHSFGVSFYFFFMFLHIMKGMWYSSNHLPWSWYSGVVIFVLSIATAFVGYVLPDGQMSFWGATVIGGLLKFFGKANVLIFGGQTVGPETLERFFSIHVILPVIILLVVIFHLYVLHRDGSSNPLAVIDMLAIFRFHPVVLFSDIRFIVIVILLIGVQSGYGFISIFQADPDNSILSDPLNTPAHIIPEWYLLLFYATLKVFPTKVAGLLAMAGMLELLVLLVESRYFKQTVSAMNYHRVWTTSSVPLVPVLFMLGSIGKMVVHVDLIAIGTCVVLSVVLFIYKLLDSARVRA</sequence>
<gene>
    <name type="primary">MT-CYB</name>
    <name type="synonym">COB</name>
    <name type="synonym">CYTB</name>
    <name type="synonym">MTCYB</name>
    <name type="ORF">Tap370b08.q2ca38.03c</name>
</gene>
<accession>Q4UJ67</accession>
<comment type="function">
    <text evidence="3">Component of the ubiquinol-cytochrome c reductase complex (complex III or cytochrome b-c1 complex) that is part of the mitochondrial respiratory chain. The b-c1 complex mediates electron transfer from ubiquinol to cytochrome c. Contributes to the generation of a proton gradient across the mitochondrial membrane that is then used for ATP synthesis.</text>
</comment>
<comment type="cofactor">
    <cofactor evidence="3">
        <name>heme b</name>
        <dbReference type="ChEBI" id="CHEBI:60344"/>
    </cofactor>
    <text evidence="3">Binds 2 heme b groups non-covalently.</text>
</comment>
<comment type="subunit">
    <text evidence="1">The main subunits of complex b-c1 are: cytochrome b, cytochrome c1 and the Rieske protein.</text>
</comment>
<comment type="subcellular location">
    <subcellularLocation>
        <location evidence="3">Mitochondrion inner membrane</location>
        <topology evidence="3">Multi-pass membrane protein</topology>
    </subcellularLocation>
</comment>
<comment type="miscellaneous">
    <text evidence="1">Heme 1 (or BL or b562) is low-potential and absorbs at about 562 nm, and heme 2 (or BH or b566) is high-potential and absorbs at about 566 nm.</text>
</comment>
<comment type="similarity">
    <text evidence="5 6">Belongs to the cytochrome b family.</text>
</comment>
<comment type="caution">
    <text evidence="3">The protein contains an even number of transmembrane helices, fewer than predicted by bioinformatics tools.</text>
</comment>
<name>CYB_THEAN</name>
<feature type="chain" id="PRO_0000233107" description="Cytochrome b">
    <location>
        <begin position="1"/>
        <end position="363"/>
    </location>
</feature>
<feature type="transmembrane region" description="Helical" evidence="3">
    <location>
        <begin position="23"/>
        <end position="43"/>
    </location>
</feature>
<feature type="transmembrane region" description="Helical" evidence="3">
    <location>
        <begin position="67"/>
        <end position="89"/>
    </location>
</feature>
<feature type="transmembrane region" description="Helical" evidence="3">
    <location>
        <begin position="102"/>
        <end position="122"/>
    </location>
</feature>
<feature type="transmembrane region" description="Helical" evidence="3">
    <location>
        <begin position="164"/>
        <end position="184"/>
    </location>
</feature>
<feature type="transmembrane region" description="Helical" evidence="3">
    <location>
        <begin position="210"/>
        <end position="230"/>
    </location>
</feature>
<feature type="transmembrane region" description="Helical" evidence="4">
    <location>
        <begin position="271"/>
        <end position="291"/>
    </location>
</feature>
<feature type="transmembrane region" description="Helical" evidence="4">
    <location>
        <begin position="310"/>
        <end position="330"/>
    </location>
</feature>
<feature type="transmembrane region" description="Helical" evidence="4">
    <location>
        <begin position="332"/>
        <end position="352"/>
    </location>
</feature>
<feature type="binding site" description="axial binding residue" evidence="6">
    <location>
        <position position="73"/>
    </location>
    <ligand>
        <name>heme b</name>
        <dbReference type="ChEBI" id="CHEBI:60344"/>
        <label>b562</label>
    </ligand>
    <ligandPart>
        <name>Fe</name>
        <dbReference type="ChEBI" id="CHEBI:18248"/>
    </ligandPart>
</feature>
<feature type="binding site" description="axial binding residue" evidence="6">
    <location>
        <position position="87"/>
    </location>
    <ligand>
        <name>heme b</name>
        <dbReference type="ChEBI" id="CHEBI:60344"/>
        <label>b566</label>
    </ligand>
    <ligandPart>
        <name>Fe</name>
        <dbReference type="ChEBI" id="CHEBI:18248"/>
    </ligandPart>
</feature>
<feature type="binding site" description="axial binding residue" evidence="6">
    <location>
        <position position="168"/>
    </location>
    <ligand>
        <name>heme b</name>
        <dbReference type="ChEBI" id="CHEBI:60344"/>
        <label>b562</label>
    </ligand>
    <ligandPart>
        <name>Fe</name>
        <dbReference type="ChEBI" id="CHEBI:18248"/>
    </ligandPart>
</feature>
<feature type="binding site" description="axial binding residue" evidence="6">
    <location>
        <position position="182"/>
    </location>
    <ligand>
        <name>heme b</name>
        <dbReference type="ChEBI" id="CHEBI:60344"/>
        <label>b566</label>
    </ligand>
    <ligandPart>
        <name>Fe</name>
        <dbReference type="ChEBI" id="CHEBI:18248"/>
    </ligandPart>
</feature>
<feature type="binding site" evidence="2">
    <location>
        <position position="187"/>
    </location>
    <ligand>
        <name>a ubiquinone</name>
        <dbReference type="ChEBI" id="CHEBI:16389"/>
    </ligand>
</feature>